<evidence type="ECO:0000255" key="1">
    <source>
        <dbReference type="HAMAP-Rule" id="MF_01569"/>
    </source>
</evidence>
<protein>
    <recommendedName>
        <fullName evidence="1">Proline--tRNA ligase</fullName>
        <ecNumber evidence="1">6.1.1.15</ecNumber>
    </recommendedName>
    <alternativeName>
        <fullName evidence="1">Prolyl-tRNA synthetase</fullName>
        <shortName evidence="1">ProRS</shortName>
    </alternativeName>
</protein>
<accession>Q83GR4</accession>
<proteinExistence type="inferred from homology"/>
<dbReference type="EC" id="6.1.1.15" evidence="1"/>
<dbReference type="EMBL" id="AE014184">
    <property type="protein sequence ID" value="AAO44280.1"/>
    <property type="molecule type" value="Genomic_DNA"/>
</dbReference>
<dbReference type="RefSeq" id="WP_011102409.1">
    <property type="nucleotide sequence ID" value="NC_004572.3"/>
</dbReference>
<dbReference type="SMR" id="Q83GR4"/>
<dbReference type="STRING" id="203267.TWT_183"/>
<dbReference type="KEGG" id="twh:TWT_183"/>
<dbReference type="eggNOG" id="COG0442">
    <property type="taxonomic scope" value="Bacteria"/>
</dbReference>
<dbReference type="HOGENOM" id="CLU_016739_0_0_11"/>
<dbReference type="OrthoDB" id="9809052at2"/>
<dbReference type="Proteomes" id="UP000002200">
    <property type="component" value="Chromosome"/>
</dbReference>
<dbReference type="GO" id="GO:0005829">
    <property type="term" value="C:cytosol"/>
    <property type="evidence" value="ECO:0007669"/>
    <property type="project" value="TreeGrafter"/>
</dbReference>
<dbReference type="GO" id="GO:0005524">
    <property type="term" value="F:ATP binding"/>
    <property type="evidence" value="ECO:0007669"/>
    <property type="project" value="UniProtKB-UniRule"/>
</dbReference>
<dbReference type="GO" id="GO:0004827">
    <property type="term" value="F:proline-tRNA ligase activity"/>
    <property type="evidence" value="ECO:0007669"/>
    <property type="project" value="UniProtKB-UniRule"/>
</dbReference>
<dbReference type="GO" id="GO:0006433">
    <property type="term" value="P:prolyl-tRNA aminoacylation"/>
    <property type="evidence" value="ECO:0007669"/>
    <property type="project" value="UniProtKB-UniRule"/>
</dbReference>
<dbReference type="CDD" id="cd00779">
    <property type="entry name" value="ProRS_core_prok"/>
    <property type="match status" value="1"/>
</dbReference>
<dbReference type="Gene3D" id="3.40.50.800">
    <property type="entry name" value="Anticodon-binding domain"/>
    <property type="match status" value="1"/>
</dbReference>
<dbReference type="Gene3D" id="3.30.930.10">
    <property type="entry name" value="Bira Bifunctional Protein, Domain 2"/>
    <property type="match status" value="2"/>
</dbReference>
<dbReference type="HAMAP" id="MF_01569">
    <property type="entry name" value="Pro_tRNA_synth_type1"/>
    <property type="match status" value="1"/>
</dbReference>
<dbReference type="InterPro" id="IPR002314">
    <property type="entry name" value="aa-tRNA-synt_IIb"/>
</dbReference>
<dbReference type="InterPro" id="IPR006195">
    <property type="entry name" value="aa-tRNA-synth_II"/>
</dbReference>
<dbReference type="InterPro" id="IPR045864">
    <property type="entry name" value="aa-tRNA-synth_II/BPL/LPL"/>
</dbReference>
<dbReference type="InterPro" id="IPR004154">
    <property type="entry name" value="Anticodon-bd"/>
</dbReference>
<dbReference type="InterPro" id="IPR036621">
    <property type="entry name" value="Anticodon-bd_dom_sf"/>
</dbReference>
<dbReference type="InterPro" id="IPR002316">
    <property type="entry name" value="Pro-tRNA-ligase_IIa"/>
</dbReference>
<dbReference type="InterPro" id="IPR004500">
    <property type="entry name" value="Pro-tRNA-synth_IIa_bac-type"/>
</dbReference>
<dbReference type="InterPro" id="IPR023717">
    <property type="entry name" value="Pro-tRNA-Synthase_IIa_type1"/>
</dbReference>
<dbReference type="InterPro" id="IPR050062">
    <property type="entry name" value="Pro-tRNA_synthetase"/>
</dbReference>
<dbReference type="InterPro" id="IPR033730">
    <property type="entry name" value="ProRS_core_prok"/>
</dbReference>
<dbReference type="NCBIfam" id="NF006625">
    <property type="entry name" value="PRK09194.1"/>
    <property type="match status" value="1"/>
</dbReference>
<dbReference type="NCBIfam" id="TIGR00409">
    <property type="entry name" value="proS_fam_II"/>
    <property type="match status" value="1"/>
</dbReference>
<dbReference type="PANTHER" id="PTHR42753">
    <property type="entry name" value="MITOCHONDRIAL RIBOSOME PROTEIN L39/PROLYL-TRNA LIGASE FAMILY MEMBER"/>
    <property type="match status" value="1"/>
</dbReference>
<dbReference type="PANTHER" id="PTHR42753:SF2">
    <property type="entry name" value="PROLINE--TRNA LIGASE"/>
    <property type="match status" value="1"/>
</dbReference>
<dbReference type="Pfam" id="PF03129">
    <property type="entry name" value="HGTP_anticodon"/>
    <property type="match status" value="1"/>
</dbReference>
<dbReference type="Pfam" id="PF00587">
    <property type="entry name" value="tRNA-synt_2b"/>
    <property type="match status" value="1"/>
</dbReference>
<dbReference type="PRINTS" id="PR01046">
    <property type="entry name" value="TRNASYNTHPRO"/>
</dbReference>
<dbReference type="SUPFAM" id="SSF52954">
    <property type="entry name" value="Class II aaRS ABD-related"/>
    <property type="match status" value="1"/>
</dbReference>
<dbReference type="SUPFAM" id="SSF55681">
    <property type="entry name" value="Class II aaRS and biotin synthetases"/>
    <property type="match status" value="1"/>
</dbReference>
<dbReference type="PROSITE" id="PS50862">
    <property type="entry name" value="AA_TRNA_LIGASE_II"/>
    <property type="match status" value="1"/>
</dbReference>
<name>SYP_TROWT</name>
<reference key="1">
    <citation type="journal article" date="2003" name="Genome Res.">
        <title>Tropheryma whipplei twist: a human pathogenic Actinobacteria with a reduced genome.</title>
        <authorList>
            <person name="Raoult D."/>
            <person name="Ogata H."/>
            <person name="Audic S."/>
            <person name="Robert C."/>
            <person name="Suhre K."/>
            <person name="Drancourt M."/>
            <person name="Claverie J.-M."/>
        </authorList>
    </citation>
    <scope>NUCLEOTIDE SEQUENCE [LARGE SCALE GENOMIC DNA]</scope>
    <source>
        <strain>Twist</strain>
    </source>
</reference>
<organism>
    <name type="scientific">Tropheryma whipplei (strain Twist)</name>
    <name type="common">Whipple's bacillus</name>
    <dbReference type="NCBI Taxonomy" id="203267"/>
    <lineage>
        <taxon>Bacteria</taxon>
        <taxon>Bacillati</taxon>
        <taxon>Actinomycetota</taxon>
        <taxon>Actinomycetes</taxon>
        <taxon>Micrococcales</taxon>
        <taxon>Tropherymataceae</taxon>
        <taxon>Tropheryma</taxon>
    </lineage>
</organism>
<sequence>MITKVSGFLFRTFREDPATTESRGYGFLLRAGYIRQTGSGIFSWMPLGLKVRHKIENIIRYEMGQVNAIEVLFPALFSADLFKQSGRWSEYGDDIFRLKDRRQGDYLLAPTHEEAFTQMMKEICTSYRDLPRTVYQIQDKYRDELRPRAGLLRSREFSMKDAYSFDLDEKGLRQSYEAQKRAYKKIFDRLKIDYVIVKANAGAMGGSVSEEFLHPTEMGDDTFVVTADGSAFNAEVYVTPPGPAIDYSNAPEAEDCETPGVISIPDLVNHMNSSGRFIGRVIESSDCLKCLLFRIEYAEVQNGNPSNLVVKKILERGFEYIGFLVPGDRNVDLKRAQVALSPLTIEPADNRVFECNPSFVRGSIGPGLSGVFYCADPRVSLGSSWIIGANRPGVHRIGAIAGRDFSFDCTLDVSSIKTGDKSEWGPVTVKRGIEIGHLFQLGLKYSNALGLKVLDKDGYNKAVFMGSYGIGVSRLFALIAEKNCDERGLKWPAVLAPFDLHVVLLSSARAELIDSLTDCGLDVLVDDRRVSPGVKFTDAQLIGVPKIIVIGDKTRGEDVEVWDRANDQRTVLPLKEMIQGVIQGVIQGVIQGVIQGGDTGGDTGGDTGGCTER</sequence>
<gene>
    <name evidence="1" type="primary">proS</name>
    <name type="ordered locus">TWT_183</name>
</gene>
<comment type="function">
    <text evidence="1">Catalyzes the attachment of proline to tRNA(Pro) in a two-step reaction: proline is first activated by ATP to form Pro-AMP and then transferred to the acceptor end of tRNA(Pro). As ProRS can inadvertently accommodate and process non-cognate amino acids such as alanine and cysteine, to avoid such errors it has two additional distinct editing activities against alanine. One activity is designated as 'pretransfer' editing and involves the tRNA(Pro)-independent hydrolysis of activated Ala-AMP. The other activity is designated 'posttransfer' editing and involves deacylation of mischarged Ala-tRNA(Pro). The misacylated Cys-tRNA(Pro) is not edited by ProRS.</text>
</comment>
<comment type="catalytic activity">
    <reaction evidence="1">
        <text>tRNA(Pro) + L-proline + ATP = L-prolyl-tRNA(Pro) + AMP + diphosphate</text>
        <dbReference type="Rhea" id="RHEA:14305"/>
        <dbReference type="Rhea" id="RHEA-COMP:9700"/>
        <dbReference type="Rhea" id="RHEA-COMP:9702"/>
        <dbReference type="ChEBI" id="CHEBI:30616"/>
        <dbReference type="ChEBI" id="CHEBI:33019"/>
        <dbReference type="ChEBI" id="CHEBI:60039"/>
        <dbReference type="ChEBI" id="CHEBI:78442"/>
        <dbReference type="ChEBI" id="CHEBI:78532"/>
        <dbReference type="ChEBI" id="CHEBI:456215"/>
        <dbReference type="EC" id="6.1.1.15"/>
    </reaction>
</comment>
<comment type="subunit">
    <text evidence="1">Homodimer.</text>
</comment>
<comment type="subcellular location">
    <subcellularLocation>
        <location evidence="1">Cytoplasm</location>
    </subcellularLocation>
</comment>
<comment type="domain">
    <text evidence="1">Consists of three domains: the N-terminal catalytic domain, the editing domain and the C-terminal anticodon-binding domain.</text>
</comment>
<comment type="similarity">
    <text evidence="1">Belongs to the class-II aminoacyl-tRNA synthetase family. ProS type 1 subfamily.</text>
</comment>
<keyword id="KW-0030">Aminoacyl-tRNA synthetase</keyword>
<keyword id="KW-0067">ATP-binding</keyword>
<keyword id="KW-0963">Cytoplasm</keyword>
<keyword id="KW-0436">Ligase</keyword>
<keyword id="KW-0547">Nucleotide-binding</keyword>
<keyword id="KW-0648">Protein biosynthesis</keyword>
<keyword id="KW-1185">Reference proteome</keyword>
<feature type="chain" id="PRO_0000248807" description="Proline--tRNA ligase">
    <location>
        <begin position="1"/>
        <end position="613"/>
    </location>
</feature>